<keyword id="KW-0489">Methyltransferase</keyword>
<keyword id="KW-0949">S-adenosyl-L-methionine</keyword>
<keyword id="KW-0808">Transferase</keyword>
<feature type="chain" id="PRO_0000436132" description="Methyltransferase afvD">
    <location>
        <begin position="1"/>
        <end position="259"/>
    </location>
</feature>
<sequence>MQESLTSGSSASLNIHDKRFAALYELGGKITELFAKELISQSGLPWSSQEPLVVLDNACGTGAVSSVLHHTIGNDKKANWHLTCGDKSEDMLHYTRQKMLQEEWHNAEVKIVNAQDTRLPSAHFTHIFTAFAIWVCTLSAAITNLSGDLPAPSEKEIHGVYNVGWDEEASVRAKFEQAGFNDIKVRKVIKEYLVPVNQFVESCTILIPTIVNIFWTQDQRDQYESELPMAVHRYVEGKYGRDGMASMEAEAIIATGHKH</sequence>
<reference key="1">
    <citation type="journal article" date="2015" name="Genome Announc.">
        <title>Genome sequence of Aspergillus flavus NRRL 3357, a strain that causes aflatoxin contamination of food and feed.</title>
        <authorList>
            <person name="Nierman W.C."/>
            <person name="Yu J."/>
            <person name="Fedorova-Abrams N.D."/>
            <person name="Losada L."/>
            <person name="Cleveland T.E."/>
            <person name="Bhatnagar D."/>
            <person name="Bennett J.W."/>
            <person name="Dean R."/>
            <person name="Payne G.A."/>
        </authorList>
    </citation>
    <scope>NUCLEOTIDE SEQUENCE [LARGE SCALE GENOMIC DNA]</scope>
    <source>
        <strain>ATCC 200026 / FGSC A1120 / IAM 13836 / NRRL 3357 / JCM 12722 / SRRC 167</strain>
    </source>
</reference>
<reference key="2">
    <citation type="journal article" date="1992" name="J. Nat. Prod.">
        <title>Aflavarin and beta-aflatrem: new anti-insectan metabolites from the sclerotia of Aspergillus flavus.</title>
        <authorList>
            <person name="TePaske M.R."/>
            <person name="Gloer J.B."/>
            <person name="Wicklow D.T."/>
            <person name="Dowd P.F."/>
        </authorList>
    </citation>
    <scope>FUNCTION</scope>
</reference>
<reference key="3">
    <citation type="journal article" date="2015" name="Eukaryot. Cell">
        <title>Transcriptome analysis of Aspergillus flavus reveals veA-dependent regulation of secondary metabolite gene clusters, including the novel aflavarin cluster.</title>
        <authorList>
            <person name="Cary J.W."/>
            <person name="Han Z."/>
            <person name="Yin Y."/>
            <person name="Lohmar J.M."/>
            <person name="Shantappa S."/>
            <person name="Harris-Coward P.Y."/>
            <person name="Mack B."/>
            <person name="Ehrlich K.C."/>
            <person name="Wei Q."/>
            <person name="Arroyo-Manzanares N."/>
            <person name="Uka V."/>
            <person name="Vanhaecke L."/>
            <person name="Bhatnagar D."/>
            <person name="Yu J."/>
            <person name="Nierman W.C."/>
            <person name="Johns M.A."/>
            <person name="Sorensen D."/>
            <person name="Shen H."/>
            <person name="De Saeger S."/>
            <person name="Diana Di Mavungu J."/>
            <person name="Calvo A.M."/>
        </authorList>
    </citation>
    <scope>FUNCTION</scope>
    <scope>DISRUPTION PHENOTYPE</scope>
    <scope>INDUCTION</scope>
</reference>
<organism>
    <name type="scientific">Aspergillus flavus (strain ATCC 200026 / FGSC A1120 / IAM 13836 / NRRL 3357 / JCM 12722 / SRRC 167)</name>
    <dbReference type="NCBI Taxonomy" id="332952"/>
    <lineage>
        <taxon>Eukaryota</taxon>
        <taxon>Fungi</taxon>
        <taxon>Dikarya</taxon>
        <taxon>Ascomycota</taxon>
        <taxon>Pezizomycotina</taxon>
        <taxon>Eurotiomycetes</taxon>
        <taxon>Eurotiomycetidae</taxon>
        <taxon>Eurotiales</taxon>
        <taxon>Aspergillaceae</taxon>
        <taxon>Aspergillus</taxon>
        <taxon>Aspergillus subgen. Circumdati</taxon>
    </lineage>
</organism>
<protein>
    <recommendedName>
        <fullName evidence="3">Methyltransferase afvD</fullName>
        <ecNumber evidence="5">2.1.1.-</ecNumber>
    </recommendedName>
    <alternativeName>
        <fullName evidence="3">Aflavarin synthesis protein D</fullName>
    </alternativeName>
</protein>
<accession>B8N8R2</accession>
<proteinExistence type="evidence at transcript level"/>
<comment type="function">
    <text evidence="1 2">Methyltransferase; part of the gene cluster that mediates the biosynthesis of aflavarin, a bicoumarin that exhibits anti-insectan activity against the fungivorous beetle C.hemipterus (PubMed:26209694, Ref.2).</text>
</comment>
<comment type="pathway">
    <text evidence="5">Secondary metabolite biosynthesis.</text>
</comment>
<comment type="induction">
    <text evidence="1">Expression is induced by the developmental and secondary metabolism regulator veA (PubMed:26209694).</text>
</comment>
<comment type="disruption phenotype">
    <text evidence="1">Fails to produce aflavarin (PubMed:26209694).</text>
</comment>
<comment type="similarity">
    <text evidence="4">Belongs to the class I-like SAM-binding methyltransferase superfamily.</text>
</comment>
<gene>
    <name evidence="3" type="primary">afvD</name>
    <name type="ORF">AFLA_108570</name>
</gene>
<dbReference type="EC" id="2.1.1.-" evidence="5"/>
<dbReference type="EMBL" id="EQ963475">
    <property type="protein sequence ID" value="EED53481.1"/>
    <property type="molecule type" value="Genomic_DNA"/>
</dbReference>
<dbReference type="RefSeq" id="XP_002376727.1">
    <property type="nucleotide sequence ID" value="XM_002376686.1"/>
</dbReference>
<dbReference type="SMR" id="B8N8R2"/>
<dbReference type="EnsemblFungi" id="EED53481">
    <property type="protein sequence ID" value="EED53481"/>
    <property type="gene ID" value="AFLA_108570"/>
</dbReference>
<dbReference type="VEuPathDB" id="FungiDB:AFLA_006789"/>
<dbReference type="eggNOG" id="ENOG502S4V1">
    <property type="taxonomic scope" value="Eukaryota"/>
</dbReference>
<dbReference type="HOGENOM" id="CLU_065416_0_0_1"/>
<dbReference type="OMA" id="TLAFTTW"/>
<dbReference type="GO" id="GO:0008168">
    <property type="term" value="F:methyltransferase activity"/>
    <property type="evidence" value="ECO:0007669"/>
    <property type="project" value="UniProtKB-KW"/>
</dbReference>
<dbReference type="GO" id="GO:0032259">
    <property type="term" value="P:methylation"/>
    <property type="evidence" value="ECO:0007669"/>
    <property type="project" value="UniProtKB-KW"/>
</dbReference>
<dbReference type="CDD" id="cd02440">
    <property type="entry name" value="AdoMet_MTases"/>
    <property type="match status" value="1"/>
</dbReference>
<dbReference type="Gene3D" id="3.40.50.150">
    <property type="entry name" value="Vaccinia Virus protein VP39"/>
    <property type="match status" value="1"/>
</dbReference>
<dbReference type="InterPro" id="IPR041698">
    <property type="entry name" value="Methyltransf_25"/>
</dbReference>
<dbReference type="InterPro" id="IPR029063">
    <property type="entry name" value="SAM-dependent_MTases_sf"/>
</dbReference>
<dbReference type="Pfam" id="PF13649">
    <property type="entry name" value="Methyltransf_25"/>
    <property type="match status" value="1"/>
</dbReference>
<dbReference type="SUPFAM" id="SSF53335">
    <property type="entry name" value="S-adenosyl-L-methionine-dependent methyltransferases"/>
    <property type="match status" value="1"/>
</dbReference>
<evidence type="ECO:0000269" key="1">
    <source>
    </source>
</evidence>
<evidence type="ECO:0000269" key="2">
    <source ref="2"/>
</evidence>
<evidence type="ECO:0000303" key="3">
    <source>
    </source>
</evidence>
<evidence type="ECO:0000305" key="4"/>
<evidence type="ECO:0000305" key="5">
    <source>
    </source>
</evidence>
<name>AFVD_ASPFN</name>